<reference key="1">
    <citation type="journal article" date="2010" name="J. Bacteriol.">
        <title>Complete genome sequence of Beijerinckia indica subsp. indica.</title>
        <authorList>
            <person name="Tamas I."/>
            <person name="Dedysh S.N."/>
            <person name="Liesack W."/>
            <person name="Stott M.B."/>
            <person name="Alam M."/>
            <person name="Murrell J.C."/>
            <person name="Dunfield P.F."/>
        </authorList>
    </citation>
    <scope>NUCLEOTIDE SEQUENCE [LARGE SCALE GENOMIC DNA]</scope>
    <source>
        <strain>ATCC 9039 / DSM 1715 / NCIMB 8712</strain>
    </source>
</reference>
<evidence type="ECO:0000255" key="1">
    <source>
        <dbReference type="HAMAP-Rule" id="MF_00274"/>
    </source>
</evidence>
<proteinExistence type="inferred from homology"/>
<protein>
    <recommendedName>
        <fullName evidence="1">Nucleoid-associated protein Bind_0255</fullName>
    </recommendedName>
</protein>
<keyword id="KW-0963">Cytoplasm</keyword>
<keyword id="KW-0238">DNA-binding</keyword>
<keyword id="KW-1185">Reference proteome</keyword>
<gene>
    <name type="ordered locus">Bind_0255</name>
</gene>
<name>Y255_BEII9</name>
<dbReference type="EMBL" id="CP001016">
    <property type="protein sequence ID" value="ACB93911.1"/>
    <property type="molecule type" value="Genomic_DNA"/>
</dbReference>
<dbReference type="RefSeq" id="WP_012383269.1">
    <property type="nucleotide sequence ID" value="NC_010581.1"/>
</dbReference>
<dbReference type="SMR" id="B2ICM2"/>
<dbReference type="STRING" id="395963.Bind_0255"/>
<dbReference type="KEGG" id="bid:Bind_0255"/>
<dbReference type="eggNOG" id="COG0718">
    <property type="taxonomic scope" value="Bacteria"/>
</dbReference>
<dbReference type="HOGENOM" id="CLU_140930_0_1_5"/>
<dbReference type="OrthoDB" id="9803080at2"/>
<dbReference type="Proteomes" id="UP000001695">
    <property type="component" value="Chromosome"/>
</dbReference>
<dbReference type="GO" id="GO:0043590">
    <property type="term" value="C:bacterial nucleoid"/>
    <property type="evidence" value="ECO:0007669"/>
    <property type="project" value="UniProtKB-UniRule"/>
</dbReference>
<dbReference type="GO" id="GO:0005829">
    <property type="term" value="C:cytosol"/>
    <property type="evidence" value="ECO:0007669"/>
    <property type="project" value="TreeGrafter"/>
</dbReference>
<dbReference type="GO" id="GO:0003677">
    <property type="term" value="F:DNA binding"/>
    <property type="evidence" value="ECO:0007669"/>
    <property type="project" value="UniProtKB-UniRule"/>
</dbReference>
<dbReference type="Gene3D" id="3.30.1310.10">
    <property type="entry name" value="Nucleoid-associated protein YbaB-like domain"/>
    <property type="match status" value="1"/>
</dbReference>
<dbReference type="HAMAP" id="MF_00274">
    <property type="entry name" value="DNA_YbaB_EbfC"/>
    <property type="match status" value="1"/>
</dbReference>
<dbReference type="InterPro" id="IPR036894">
    <property type="entry name" value="YbaB-like_sf"/>
</dbReference>
<dbReference type="InterPro" id="IPR004401">
    <property type="entry name" value="YbaB/EbfC"/>
</dbReference>
<dbReference type="NCBIfam" id="TIGR00103">
    <property type="entry name" value="DNA_YbaB_EbfC"/>
    <property type="match status" value="1"/>
</dbReference>
<dbReference type="PANTHER" id="PTHR33449">
    <property type="entry name" value="NUCLEOID-ASSOCIATED PROTEIN YBAB"/>
    <property type="match status" value="1"/>
</dbReference>
<dbReference type="PANTHER" id="PTHR33449:SF1">
    <property type="entry name" value="NUCLEOID-ASSOCIATED PROTEIN YBAB"/>
    <property type="match status" value="1"/>
</dbReference>
<dbReference type="Pfam" id="PF02575">
    <property type="entry name" value="YbaB_DNA_bd"/>
    <property type="match status" value="1"/>
</dbReference>
<dbReference type="PIRSF" id="PIRSF004555">
    <property type="entry name" value="UCP004555"/>
    <property type="match status" value="1"/>
</dbReference>
<dbReference type="SUPFAM" id="SSF82607">
    <property type="entry name" value="YbaB-like"/>
    <property type="match status" value="1"/>
</dbReference>
<accession>B2ICM2</accession>
<organism>
    <name type="scientific">Beijerinckia indica subsp. indica (strain ATCC 9039 / DSM 1715 / NCIMB 8712)</name>
    <dbReference type="NCBI Taxonomy" id="395963"/>
    <lineage>
        <taxon>Bacteria</taxon>
        <taxon>Pseudomonadati</taxon>
        <taxon>Pseudomonadota</taxon>
        <taxon>Alphaproteobacteria</taxon>
        <taxon>Hyphomicrobiales</taxon>
        <taxon>Beijerinckiaceae</taxon>
        <taxon>Beijerinckia</taxon>
    </lineage>
</organism>
<feature type="chain" id="PRO_1000114583" description="Nucleoid-associated protein Bind_0255">
    <location>
        <begin position="1"/>
        <end position="101"/>
    </location>
</feature>
<comment type="function">
    <text evidence="1">Binds to DNA and alters its conformation. May be involved in regulation of gene expression, nucleoid organization and DNA protection.</text>
</comment>
<comment type="subunit">
    <text evidence="1">Homodimer.</text>
</comment>
<comment type="subcellular location">
    <subcellularLocation>
        <location evidence="1">Cytoplasm</location>
        <location evidence="1">Nucleoid</location>
    </subcellularLocation>
</comment>
<comment type="similarity">
    <text evidence="1">Belongs to the YbaB/EbfC family.</text>
</comment>
<sequence length="101" mass="11150">MKDMMGLLKQAQAMQAKVQDMQAALEQITVEGHAGGGLVKITLTVKGQIRSVSIDPSLLKPEEKEIVEDLVALAYENARHQAEQIMEEKMREVTGGMQLPF</sequence>